<organism>
    <name type="scientific">Staphylococcus aureus (strain Newman)</name>
    <dbReference type="NCBI Taxonomy" id="426430"/>
    <lineage>
        <taxon>Bacteria</taxon>
        <taxon>Bacillati</taxon>
        <taxon>Bacillota</taxon>
        <taxon>Bacilli</taxon>
        <taxon>Bacillales</taxon>
        <taxon>Staphylococcaceae</taxon>
        <taxon>Staphylococcus</taxon>
    </lineage>
</organism>
<proteinExistence type="inferred from homology"/>
<dbReference type="EMBL" id="AP009351">
    <property type="protein sequence ID" value="BAF68210.1"/>
    <property type="molecule type" value="Genomic_DNA"/>
</dbReference>
<dbReference type="RefSeq" id="WP_000917289.1">
    <property type="nucleotide sequence ID" value="NZ_JBBIAE010000015.1"/>
</dbReference>
<dbReference type="SMR" id="A6QIM8"/>
<dbReference type="GeneID" id="98346332"/>
<dbReference type="KEGG" id="sae:NWMN_1938"/>
<dbReference type="HOGENOM" id="CLU_132825_2_1_9"/>
<dbReference type="Proteomes" id="UP000006386">
    <property type="component" value="Chromosome"/>
</dbReference>
<dbReference type="GO" id="GO:0005737">
    <property type="term" value="C:cytoplasm"/>
    <property type="evidence" value="ECO:0007669"/>
    <property type="project" value="UniProtKB-SubCell"/>
</dbReference>
<dbReference type="GO" id="GO:0005524">
    <property type="term" value="F:ATP binding"/>
    <property type="evidence" value="ECO:0007669"/>
    <property type="project" value="InterPro"/>
</dbReference>
<dbReference type="GO" id="GO:0046872">
    <property type="term" value="F:metal ion binding"/>
    <property type="evidence" value="ECO:0007669"/>
    <property type="project" value="TreeGrafter"/>
</dbReference>
<dbReference type="GO" id="GO:0044183">
    <property type="term" value="F:protein folding chaperone"/>
    <property type="evidence" value="ECO:0007669"/>
    <property type="project" value="InterPro"/>
</dbReference>
<dbReference type="GO" id="GO:0051087">
    <property type="term" value="F:protein-folding chaperone binding"/>
    <property type="evidence" value="ECO:0007669"/>
    <property type="project" value="TreeGrafter"/>
</dbReference>
<dbReference type="GO" id="GO:0051082">
    <property type="term" value="F:unfolded protein binding"/>
    <property type="evidence" value="ECO:0007669"/>
    <property type="project" value="TreeGrafter"/>
</dbReference>
<dbReference type="GO" id="GO:0051085">
    <property type="term" value="P:chaperone cofactor-dependent protein refolding"/>
    <property type="evidence" value="ECO:0007669"/>
    <property type="project" value="TreeGrafter"/>
</dbReference>
<dbReference type="CDD" id="cd00320">
    <property type="entry name" value="cpn10"/>
    <property type="match status" value="1"/>
</dbReference>
<dbReference type="FunFam" id="2.30.33.40:FF:000001">
    <property type="entry name" value="10 kDa chaperonin"/>
    <property type="match status" value="1"/>
</dbReference>
<dbReference type="Gene3D" id="2.30.33.40">
    <property type="entry name" value="GroES chaperonin"/>
    <property type="match status" value="1"/>
</dbReference>
<dbReference type="HAMAP" id="MF_00580">
    <property type="entry name" value="CH10"/>
    <property type="match status" value="1"/>
</dbReference>
<dbReference type="InterPro" id="IPR020818">
    <property type="entry name" value="Chaperonin_GroES"/>
</dbReference>
<dbReference type="InterPro" id="IPR037124">
    <property type="entry name" value="Chaperonin_GroES_sf"/>
</dbReference>
<dbReference type="InterPro" id="IPR018369">
    <property type="entry name" value="Chaprnonin_Cpn10_CS"/>
</dbReference>
<dbReference type="InterPro" id="IPR011032">
    <property type="entry name" value="GroES-like_sf"/>
</dbReference>
<dbReference type="NCBIfam" id="NF001531">
    <property type="entry name" value="PRK00364.2-2"/>
    <property type="match status" value="1"/>
</dbReference>
<dbReference type="NCBIfam" id="NF001532">
    <property type="entry name" value="PRK00364.2-3"/>
    <property type="match status" value="1"/>
</dbReference>
<dbReference type="NCBIfam" id="NF001533">
    <property type="entry name" value="PRK00364.2-4"/>
    <property type="match status" value="1"/>
</dbReference>
<dbReference type="NCBIfam" id="NF001534">
    <property type="entry name" value="PRK00364.2-5"/>
    <property type="match status" value="1"/>
</dbReference>
<dbReference type="PANTHER" id="PTHR10772">
    <property type="entry name" value="10 KDA HEAT SHOCK PROTEIN"/>
    <property type="match status" value="1"/>
</dbReference>
<dbReference type="PANTHER" id="PTHR10772:SF58">
    <property type="entry name" value="CO-CHAPERONIN GROES"/>
    <property type="match status" value="1"/>
</dbReference>
<dbReference type="Pfam" id="PF00166">
    <property type="entry name" value="Cpn10"/>
    <property type="match status" value="1"/>
</dbReference>
<dbReference type="PRINTS" id="PR00297">
    <property type="entry name" value="CHAPERONIN10"/>
</dbReference>
<dbReference type="SMART" id="SM00883">
    <property type="entry name" value="Cpn10"/>
    <property type="match status" value="1"/>
</dbReference>
<dbReference type="SUPFAM" id="SSF50129">
    <property type="entry name" value="GroES-like"/>
    <property type="match status" value="1"/>
</dbReference>
<dbReference type="PROSITE" id="PS00681">
    <property type="entry name" value="CHAPERONINS_CPN10"/>
    <property type="match status" value="1"/>
</dbReference>
<evidence type="ECO:0000255" key="1">
    <source>
        <dbReference type="HAMAP-Rule" id="MF_00580"/>
    </source>
</evidence>
<accession>A6QIM8</accession>
<keyword id="KW-0143">Chaperone</keyword>
<keyword id="KW-0963">Cytoplasm</keyword>
<protein>
    <recommendedName>
        <fullName evidence="1">Co-chaperonin GroES</fullName>
    </recommendedName>
    <alternativeName>
        <fullName evidence="1">10 kDa chaperonin</fullName>
    </alternativeName>
    <alternativeName>
        <fullName evidence="1">Chaperonin-10</fullName>
        <shortName evidence="1">Cpn10</shortName>
    </alternativeName>
</protein>
<reference key="1">
    <citation type="journal article" date="2008" name="J. Bacteriol.">
        <title>Genome sequence of Staphylococcus aureus strain Newman and comparative analysis of staphylococcal genomes: polymorphism and evolution of two major pathogenicity islands.</title>
        <authorList>
            <person name="Baba T."/>
            <person name="Bae T."/>
            <person name="Schneewind O."/>
            <person name="Takeuchi F."/>
            <person name="Hiramatsu K."/>
        </authorList>
    </citation>
    <scope>NUCLEOTIDE SEQUENCE [LARGE SCALE GENOMIC DNA]</scope>
    <source>
        <strain>Newman</strain>
    </source>
</reference>
<feature type="chain" id="PRO_1000072588" description="Co-chaperonin GroES">
    <location>
        <begin position="1"/>
        <end position="94"/>
    </location>
</feature>
<comment type="function">
    <text evidence="1">Together with the chaperonin GroEL, plays an essential role in assisting protein folding. The GroEL-GroES system forms a nano-cage that allows encapsulation of the non-native substrate proteins and provides a physical environment optimized to promote and accelerate protein folding. GroES binds to the apical surface of the GroEL ring, thereby capping the opening of the GroEL channel.</text>
</comment>
<comment type="subunit">
    <text evidence="1">Heptamer of 7 subunits arranged in a ring. Interacts with the chaperonin GroEL.</text>
</comment>
<comment type="subcellular location">
    <subcellularLocation>
        <location evidence="1">Cytoplasm</location>
    </subcellularLocation>
</comment>
<comment type="similarity">
    <text evidence="1">Belongs to the GroES chaperonin family.</text>
</comment>
<gene>
    <name evidence="1" type="primary">groES</name>
    <name evidence="1" type="synonym">groS</name>
    <name type="ordered locus">NWMN_1938</name>
</gene>
<name>CH10_STAAE</name>
<sequence length="94" mass="10416">MLKPIGNRVIIEKKEQEQTTKSGIVLTDSAKEKSNEGVIVAVGTGRLLNDGTRVTPEVKEGDRVVFQQYAGTEVKRDNETYLVLNEEDILAVIE</sequence>